<gene>
    <name evidence="1" type="primary">hemC</name>
    <name type="ordered locus">GWCH70_2580</name>
</gene>
<dbReference type="EC" id="2.5.1.61" evidence="1"/>
<dbReference type="EMBL" id="CP001638">
    <property type="protein sequence ID" value="ACS25275.1"/>
    <property type="molecule type" value="Genomic_DNA"/>
</dbReference>
<dbReference type="SMR" id="C5D5K7"/>
<dbReference type="STRING" id="471223.GWCH70_2580"/>
<dbReference type="KEGG" id="gwc:GWCH70_2580"/>
<dbReference type="eggNOG" id="COG0181">
    <property type="taxonomic scope" value="Bacteria"/>
</dbReference>
<dbReference type="HOGENOM" id="CLU_019704_0_2_9"/>
<dbReference type="OrthoDB" id="9810298at2"/>
<dbReference type="UniPathway" id="UPA00251">
    <property type="reaction ID" value="UER00319"/>
</dbReference>
<dbReference type="GO" id="GO:0005737">
    <property type="term" value="C:cytoplasm"/>
    <property type="evidence" value="ECO:0007669"/>
    <property type="project" value="TreeGrafter"/>
</dbReference>
<dbReference type="GO" id="GO:0004418">
    <property type="term" value="F:hydroxymethylbilane synthase activity"/>
    <property type="evidence" value="ECO:0007669"/>
    <property type="project" value="UniProtKB-UniRule"/>
</dbReference>
<dbReference type="GO" id="GO:0006782">
    <property type="term" value="P:protoporphyrinogen IX biosynthetic process"/>
    <property type="evidence" value="ECO:0007669"/>
    <property type="project" value="UniProtKB-UniRule"/>
</dbReference>
<dbReference type="CDD" id="cd13646">
    <property type="entry name" value="PBP2_EcHMBS_like"/>
    <property type="match status" value="1"/>
</dbReference>
<dbReference type="FunFam" id="3.30.160.40:FF:000001">
    <property type="entry name" value="Porphobilinogen deaminase"/>
    <property type="match status" value="1"/>
</dbReference>
<dbReference type="FunFam" id="3.40.190.10:FF:000004">
    <property type="entry name" value="Porphobilinogen deaminase"/>
    <property type="match status" value="1"/>
</dbReference>
<dbReference type="FunFam" id="3.40.190.10:FF:000005">
    <property type="entry name" value="Porphobilinogen deaminase"/>
    <property type="match status" value="1"/>
</dbReference>
<dbReference type="Gene3D" id="3.40.190.10">
    <property type="entry name" value="Periplasmic binding protein-like II"/>
    <property type="match status" value="2"/>
</dbReference>
<dbReference type="Gene3D" id="3.30.160.40">
    <property type="entry name" value="Porphobilinogen deaminase, C-terminal domain"/>
    <property type="match status" value="1"/>
</dbReference>
<dbReference type="HAMAP" id="MF_00260">
    <property type="entry name" value="Porphobil_deam"/>
    <property type="match status" value="1"/>
</dbReference>
<dbReference type="InterPro" id="IPR000860">
    <property type="entry name" value="HemC"/>
</dbReference>
<dbReference type="InterPro" id="IPR022419">
    <property type="entry name" value="Porphobilin_deaminase_cofac_BS"/>
</dbReference>
<dbReference type="InterPro" id="IPR022417">
    <property type="entry name" value="Porphobilin_deaminase_N"/>
</dbReference>
<dbReference type="InterPro" id="IPR022418">
    <property type="entry name" value="Porphobilinogen_deaminase_C"/>
</dbReference>
<dbReference type="InterPro" id="IPR036803">
    <property type="entry name" value="Porphobilinogen_deaminase_C_sf"/>
</dbReference>
<dbReference type="NCBIfam" id="TIGR00212">
    <property type="entry name" value="hemC"/>
    <property type="match status" value="1"/>
</dbReference>
<dbReference type="PANTHER" id="PTHR11557">
    <property type="entry name" value="PORPHOBILINOGEN DEAMINASE"/>
    <property type="match status" value="1"/>
</dbReference>
<dbReference type="PANTHER" id="PTHR11557:SF0">
    <property type="entry name" value="PORPHOBILINOGEN DEAMINASE"/>
    <property type="match status" value="1"/>
</dbReference>
<dbReference type="Pfam" id="PF01379">
    <property type="entry name" value="Porphobil_deam"/>
    <property type="match status" value="1"/>
</dbReference>
<dbReference type="Pfam" id="PF03900">
    <property type="entry name" value="Porphobil_deamC"/>
    <property type="match status" value="1"/>
</dbReference>
<dbReference type="PIRSF" id="PIRSF001438">
    <property type="entry name" value="4pyrrol_synth_OHMeBilane_synth"/>
    <property type="match status" value="1"/>
</dbReference>
<dbReference type="PRINTS" id="PR00151">
    <property type="entry name" value="PORPHBDMNASE"/>
</dbReference>
<dbReference type="SUPFAM" id="SSF53850">
    <property type="entry name" value="Periplasmic binding protein-like II"/>
    <property type="match status" value="1"/>
</dbReference>
<dbReference type="SUPFAM" id="SSF54782">
    <property type="entry name" value="Porphobilinogen deaminase (hydroxymethylbilane synthase), C-terminal domain"/>
    <property type="match status" value="1"/>
</dbReference>
<dbReference type="PROSITE" id="PS00533">
    <property type="entry name" value="PORPHOBILINOGEN_DEAM"/>
    <property type="match status" value="1"/>
</dbReference>
<protein>
    <recommendedName>
        <fullName evidence="1">Porphobilinogen deaminase</fullName>
        <shortName evidence="1">PBG</shortName>
        <ecNumber evidence="1">2.5.1.61</ecNumber>
    </recommendedName>
    <alternativeName>
        <fullName evidence="1">Hydroxymethylbilane synthase</fullName>
        <shortName evidence="1">HMBS</shortName>
    </alternativeName>
    <alternativeName>
        <fullName evidence="1">Pre-uroporphyrinogen synthase</fullName>
    </alternativeName>
</protein>
<reference key="1">
    <citation type="submission" date="2009-06" db="EMBL/GenBank/DDBJ databases">
        <title>Complete sequence of chromosome of Geopacillus sp. WCH70.</title>
        <authorList>
            <consortium name="US DOE Joint Genome Institute"/>
            <person name="Lucas S."/>
            <person name="Copeland A."/>
            <person name="Lapidus A."/>
            <person name="Glavina del Rio T."/>
            <person name="Dalin E."/>
            <person name="Tice H."/>
            <person name="Bruce D."/>
            <person name="Goodwin L."/>
            <person name="Pitluck S."/>
            <person name="Chertkov O."/>
            <person name="Brettin T."/>
            <person name="Detter J.C."/>
            <person name="Han C."/>
            <person name="Larimer F."/>
            <person name="Land M."/>
            <person name="Hauser L."/>
            <person name="Kyrpides N."/>
            <person name="Mikhailova N."/>
            <person name="Brumm P."/>
            <person name="Mead D.A."/>
            <person name="Richardson P."/>
        </authorList>
    </citation>
    <scope>NUCLEOTIDE SEQUENCE [LARGE SCALE GENOMIC DNA]</scope>
    <source>
        <strain>WCH70</strain>
    </source>
</reference>
<comment type="function">
    <text evidence="1">Tetrapolymerization of the monopyrrole PBG into the hydroxymethylbilane pre-uroporphyrinogen in several discrete steps.</text>
</comment>
<comment type="catalytic activity">
    <reaction evidence="1">
        <text>4 porphobilinogen + H2O = hydroxymethylbilane + 4 NH4(+)</text>
        <dbReference type="Rhea" id="RHEA:13185"/>
        <dbReference type="ChEBI" id="CHEBI:15377"/>
        <dbReference type="ChEBI" id="CHEBI:28938"/>
        <dbReference type="ChEBI" id="CHEBI:57845"/>
        <dbReference type="ChEBI" id="CHEBI:58126"/>
        <dbReference type="EC" id="2.5.1.61"/>
    </reaction>
</comment>
<comment type="cofactor">
    <cofactor evidence="1">
        <name>dipyrromethane</name>
        <dbReference type="ChEBI" id="CHEBI:60342"/>
    </cofactor>
    <text evidence="1">Binds 1 dipyrromethane group covalently.</text>
</comment>
<comment type="pathway">
    <text evidence="1">Porphyrin-containing compound metabolism; protoporphyrin-IX biosynthesis; coproporphyrinogen-III from 5-aminolevulinate: step 2/4.</text>
</comment>
<comment type="subunit">
    <text evidence="1">Monomer.</text>
</comment>
<comment type="miscellaneous">
    <text evidence="1">The porphobilinogen subunits are added to the dipyrromethane group.</text>
</comment>
<comment type="similarity">
    <text evidence="1">Belongs to the HMBS family.</text>
</comment>
<evidence type="ECO:0000255" key="1">
    <source>
        <dbReference type="HAMAP-Rule" id="MF_00260"/>
    </source>
</evidence>
<organism>
    <name type="scientific">Geobacillus sp. (strain WCH70)</name>
    <dbReference type="NCBI Taxonomy" id="471223"/>
    <lineage>
        <taxon>Bacteria</taxon>
        <taxon>Bacillati</taxon>
        <taxon>Bacillota</taxon>
        <taxon>Bacilli</taxon>
        <taxon>Bacillales</taxon>
        <taxon>Anoxybacillaceae</taxon>
        <taxon>Geobacillus</taxon>
    </lineage>
</organism>
<keyword id="KW-0627">Porphyrin biosynthesis</keyword>
<keyword id="KW-0808">Transferase</keyword>
<sequence>MRKIIVGSRRSKLALTQTNWVIERLRQLGAPFEFEVKEIVTKGDKIIDVTLSKVGGKGLFVKEIEHAMLNGEIDMAVHSMKDMPAVLPDGLIIGCVPPREDHHDVLISKNKETFANLPSGAIVGTSSLRRSAQILAKRPDLKIKWIRGNIDTRLAKLQNEDYDAIILAAAGLVRMGWARDVITEYLSTDVCLPAVGQGALAVECRENDEELREWLQKLNDVHTERAVLAERVFLQQMEGGCQVPIAGYAYIDDREDIVLTALVASPDGKEIYKETVSGSNPEEVGTNAAKMLIERGAKALIDRIKEEMNRQ</sequence>
<proteinExistence type="inferred from homology"/>
<feature type="chain" id="PRO_1000204654" description="Porphobilinogen deaminase">
    <location>
        <begin position="1"/>
        <end position="311"/>
    </location>
</feature>
<feature type="modified residue" description="S-(dipyrrolylmethanemethyl)cysteine" evidence="1">
    <location>
        <position position="241"/>
    </location>
</feature>
<accession>C5D5K7</accession>
<name>HEM3_GEOSW</name>